<reference key="1">
    <citation type="submission" date="2007-11" db="EMBL/GenBank/DDBJ databases">
        <authorList>
            <consortium name="The Salmonella enterica serovar Arizonae Genome Sequencing Project"/>
            <person name="McClelland M."/>
            <person name="Sanderson E.K."/>
            <person name="Porwollik S."/>
            <person name="Spieth J."/>
            <person name="Clifton W.S."/>
            <person name="Fulton R."/>
            <person name="Chunyan W."/>
            <person name="Wollam A."/>
            <person name="Shah N."/>
            <person name="Pepin K."/>
            <person name="Bhonagiri V."/>
            <person name="Nash W."/>
            <person name="Johnson M."/>
            <person name="Thiruvilangam P."/>
            <person name="Wilson R."/>
        </authorList>
    </citation>
    <scope>NUCLEOTIDE SEQUENCE [LARGE SCALE GENOMIC DNA]</scope>
    <source>
        <strain>ATCC BAA-731 / CDC346-86 / RSK2980</strain>
    </source>
</reference>
<feature type="chain" id="PRO_1000081678" description="L-arabinose isomerase">
    <location>
        <begin position="1"/>
        <end position="500"/>
    </location>
</feature>
<feature type="binding site" evidence="1">
    <location>
        <position position="306"/>
    </location>
    <ligand>
        <name>Mn(2+)</name>
        <dbReference type="ChEBI" id="CHEBI:29035"/>
    </ligand>
</feature>
<feature type="binding site" evidence="1">
    <location>
        <position position="333"/>
    </location>
    <ligand>
        <name>Mn(2+)</name>
        <dbReference type="ChEBI" id="CHEBI:29035"/>
    </ligand>
</feature>
<feature type="binding site" evidence="1">
    <location>
        <position position="350"/>
    </location>
    <ligand>
        <name>Mn(2+)</name>
        <dbReference type="ChEBI" id="CHEBI:29035"/>
    </ligand>
</feature>
<feature type="binding site" evidence="1">
    <location>
        <position position="450"/>
    </location>
    <ligand>
        <name>Mn(2+)</name>
        <dbReference type="ChEBI" id="CHEBI:29035"/>
    </ligand>
</feature>
<evidence type="ECO:0000255" key="1">
    <source>
        <dbReference type="HAMAP-Rule" id="MF_00519"/>
    </source>
</evidence>
<organism>
    <name type="scientific">Salmonella arizonae (strain ATCC BAA-731 / CDC346-86 / RSK2980)</name>
    <dbReference type="NCBI Taxonomy" id="41514"/>
    <lineage>
        <taxon>Bacteria</taxon>
        <taxon>Pseudomonadati</taxon>
        <taxon>Pseudomonadota</taxon>
        <taxon>Gammaproteobacteria</taxon>
        <taxon>Enterobacterales</taxon>
        <taxon>Enterobacteriaceae</taxon>
        <taxon>Salmonella</taxon>
    </lineage>
</organism>
<dbReference type="EC" id="5.3.1.4" evidence="1"/>
<dbReference type="EMBL" id="CP000880">
    <property type="protein sequence ID" value="ABX22749.1"/>
    <property type="molecule type" value="Genomic_DNA"/>
</dbReference>
<dbReference type="SMR" id="A9MQF1"/>
<dbReference type="STRING" id="41514.SARI_02903"/>
<dbReference type="KEGG" id="ses:SARI_02903"/>
<dbReference type="HOGENOM" id="CLU_045663_0_0_6"/>
<dbReference type="UniPathway" id="UPA00145">
    <property type="reaction ID" value="UER00565"/>
</dbReference>
<dbReference type="Proteomes" id="UP000002084">
    <property type="component" value="Chromosome"/>
</dbReference>
<dbReference type="GO" id="GO:0005829">
    <property type="term" value="C:cytosol"/>
    <property type="evidence" value="ECO:0007669"/>
    <property type="project" value="TreeGrafter"/>
</dbReference>
<dbReference type="GO" id="GO:0008733">
    <property type="term" value="F:L-arabinose isomerase activity"/>
    <property type="evidence" value="ECO:0007669"/>
    <property type="project" value="UniProtKB-UniRule"/>
</dbReference>
<dbReference type="GO" id="GO:0030145">
    <property type="term" value="F:manganese ion binding"/>
    <property type="evidence" value="ECO:0007669"/>
    <property type="project" value="UniProtKB-UniRule"/>
</dbReference>
<dbReference type="GO" id="GO:0019569">
    <property type="term" value="P:L-arabinose catabolic process to xylulose 5-phosphate"/>
    <property type="evidence" value="ECO:0007669"/>
    <property type="project" value="UniProtKB-UniRule"/>
</dbReference>
<dbReference type="CDD" id="cd03557">
    <property type="entry name" value="L-arabinose_isomerase"/>
    <property type="match status" value="1"/>
</dbReference>
<dbReference type="FunFam" id="3.40.50.10940:FF:000001">
    <property type="entry name" value="L-arabinose isomerase"/>
    <property type="match status" value="1"/>
</dbReference>
<dbReference type="Gene3D" id="3.40.50.10940">
    <property type="match status" value="1"/>
</dbReference>
<dbReference type="HAMAP" id="MF_00519">
    <property type="entry name" value="Arabinose_Isome"/>
    <property type="match status" value="1"/>
</dbReference>
<dbReference type="InterPro" id="IPR024664">
    <property type="entry name" value="Ara_Isoase_C"/>
</dbReference>
<dbReference type="InterPro" id="IPR055390">
    <property type="entry name" value="AraA_central"/>
</dbReference>
<dbReference type="InterPro" id="IPR055389">
    <property type="entry name" value="AraA_N"/>
</dbReference>
<dbReference type="InterPro" id="IPR038583">
    <property type="entry name" value="AraA_N_sf"/>
</dbReference>
<dbReference type="InterPro" id="IPR004216">
    <property type="entry name" value="Fuc/Ara_isomerase_C"/>
</dbReference>
<dbReference type="InterPro" id="IPR009015">
    <property type="entry name" value="Fucose_isomerase_N/cen_sf"/>
</dbReference>
<dbReference type="InterPro" id="IPR003762">
    <property type="entry name" value="Lara_isomerase"/>
</dbReference>
<dbReference type="NCBIfam" id="NF002795">
    <property type="entry name" value="PRK02929.1"/>
    <property type="match status" value="1"/>
</dbReference>
<dbReference type="PANTHER" id="PTHR38464">
    <property type="entry name" value="L-ARABINOSE ISOMERASE"/>
    <property type="match status" value="1"/>
</dbReference>
<dbReference type="PANTHER" id="PTHR38464:SF1">
    <property type="entry name" value="L-ARABINOSE ISOMERASE"/>
    <property type="match status" value="1"/>
</dbReference>
<dbReference type="Pfam" id="PF24856">
    <property type="entry name" value="AraA_central"/>
    <property type="match status" value="1"/>
</dbReference>
<dbReference type="Pfam" id="PF02610">
    <property type="entry name" value="AraA_N"/>
    <property type="match status" value="1"/>
</dbReference>
<dbReference type="Pfam" id="PF11762">
    <property type="entry name" value="Arabinose_Iso_C"/>
    <property type="match status" value="1"/>
</dbReference>
<dbReference type="PIRSF" id="PIRSF001478">
    <property type="entry name" value="L-ara_isomerase"/>
    <property type="match status" value="1"/>
</dbReference>
<dbReference type="SUPFAM" id="SSF50443">
    <property type="entry name" value="FucI/AraA C-terminal domain-like"/>
    <property type="match status" value="1"/>
</dbReference>
<dbReference type="SUPFAM" id="SSF53743">
    <property type="entry name" value="FucI/AraA N-terminal and middle domains"/>
    <property type="match status" value="1"/>
</dbReference>
<accession>A9MQF1</accession>
<keyword id="KW-0054">Arabinose catabolism</keyword>
<keyword id="KW-0119">Carbohydrate metabolism</keyword>
<keyword id="KW-0413">Isomerase</keyword>
<keyword id="KW-0464">Manganese</keyword>
<keyword id="KW-0479">Metal-binding</keyword>
<keyword id="KW-1185">Reference proteome</keyword>
<proteinExistence type="inferred from homology"/>
<name>ARAA_SALAR</name>
<comment type="function">
    <text evidence="1">Catalyzes the conversion of L-arabinose to L-ribulose.</text>
</comment>
<comment type="catalytic activity">
    <reaction evidence="1">
        <text>beta-L-arabinopyranose = L-ribulose</text>
        <dbReference type="Rhea" id="RHEA:14821"/>
        <dbReference type="ChEBI" id="CHEBI:16880"/>
        <dbReference type="ChEBI" id="CHEBI:40886"/>
        <dbReference type="EC" id="5.3.1.4"/>
    </reaction>
</comment>
<comment type="cofactor">
    <cofactor evidence="1">
        <name>Mn(2+)</name>
        <dbReference type="ChEBI" id="CHEBI:29035"/>
    </cofactor>
    <text evidence="1">Binds 1 Mn(2+) ion per subunit.</text>
</comment>
<comment type="pathway">
    <text evidence="1">Carbohydrate degradation; L-arabinose degradation via L-ribulose; D-xylulose 5-phosphate from L-arabinose (bacterial route): step 1/3.</text>
</comment>
<comment type="subunit">
    <text evidence="1">Homohexamer.</text>
</comment>
<comment type="similarity">
    <text evidence="1">Belongs to the arabinose isomerase family.</text>
</comment>
<gene>
    <name evidence="1" type="primary">araA</name>
    <name type="ordered locus">SARI_02903</name>
</gene>
<protein>
    <recommendedName>
        <fullName evidence="1">L-arabinose isomerase</fullName>
        <ecNumber evidence="1">5.3.1.4</ecNumber>
    </recommendedName>
</protein>
<sequence>MTIFDNYEVWFVIGSQHLYGPKTLRQVTQHAEHVVKALNTEAKLPCKLVLKPLGTSPDEITAICRDANYDDRCAGLVVWLHTFSPAKMWINGLSILNKPLLQFHTQFNAALPWDSIDMDFMNLNQTAHGGREFGFIGARMRQQHAVVTGHWQDKEAHTRISAWMRQAVSKQDIRQLKVCRFGDNMREVAVTDGDKVAAQIKFGFSVNTWAVGDLVQVVNSISDGDINALIDEYESSYTLTPATRIHGDKRQNVREAARIELGIKRFLEQGGFHAFTTTFEDLHGLKQLPGLAVQRLMQQGYGFAGEGDWKTAALLRIMKVMSTGLQGGTSFMEDYTYHFEKGNDLVLGSHMLEVCPSIAVEEKPLLDVQHLGIGGKEDPARLIFNTQTGSAIVASLIDLGDRYRLLVNCIDTVKTPHDLPKLPVANALWKAQPDLPTASEAWILAGGAHHTVFSHALDLNDMRQFAEMHDIEIAVIDNDTHLPGFKDALRWNDMYYSLKH</sequence>